<evidence type="ECO:0000255" key="1">
    <source>
        <dbReference type="HAMAP-Rule" id="MF_01192"/>
    </source>
</evidence>
<gene>
    <name evidence="1" type="primary">xni</name>
    <name evidence="1" type="synonym">ygdG</name>
    <name type="ordered locus">SSPA2642</name>
</gene>
<sequence>MAAHLLIVDALNLIRRIHAVQGSPCVETCQHALDQLIIHSQPTHAVAVFDDDARSSGWRHQRLPDYKAGRPPMPDDLHNEMPALRAAFEQRGVRCWASDGNEADDLAATLALKVTEAGHQATIVSTDKGYCQLLSPGLRIRDYFQKRWLDAPFIEKEFGVLPRQLPDYWGLAGISSSKVPGVAGIGPKSATQLLIQFQNLEGIYAHLDEVPEKWRKKLETHKEMAFLCRDIARLQTDLHIDGNLQQLRLVR</sequence>
<name>XNI_SALPK</name>
<feature type="chain" id="PRO_1000138392" description="Flap endonuclease Xni">
    <location>
        <begin position="1"/>
        <end position="251"/>
    </location>
</feature>
<feature type="domain" description="5'-3' exonuclease" evidence="1">
    <location>
        <begin position="160"/>
        <end position="249"/>
    </location>
</feature>
<feature type="region of interest" description="Interaction with DNA" evidence="1">
    <location>
        <begin position="184"/>
        <end position="189"/>
    </location>
</feature>
<feature type="binding site" evidence="1">
    <location>
        <position position="104"/>
    </location>
    <ligand>
        <name>Mg(2+)</name>
        <dbReference type="ChEBI" id="CHEBI:18420"/>
    </ligand>
</feature>
<feature type="binding site" evidence="1">
    <location>
        <position position="171"/>
    </location>
    <ligand>
        <name>K(+)</name>
        <dbReference type="ChEBI" id="CHEBI:29103"/>
    </ligand>
</feature>
<feature type="binding site" evidence="1">
    <location>
        <position position="172"/>
    </location>
    <ligand>
        <name>K(+)</name>
        <dbReference type="ChEBI" id="CHEBI:29103"/>
    </ligand>
</feature>
<feature type="binding site" evidence="1">
    <location>
        <position position="180"/>
    </location>
    <ligand>
        <name>K(+)</name>
        <dbReference type="ChEBI" id="CHEBI:29103"/>
    </ligand>
</feature>
<feature type="binding site" evidence="1">
    <location>
        <position position="182"/>
    </location>
    <ligand>
        <name>K(+)</name>
        <dbReference type="ChEBI" id="CHEBI:29103"/>
    </ligand>
</feature>
<feature type="binding site" evidence="1">
    <location>
        <position position="185"/>
    </location>
    <ligand>
        <name>K(+)</name>
        <dbReference type="ChEBI" id="CHEBI:29103"/>
    </ligand>
</feature>
<organism>
    <name type="scientific">Salmonella paratyphi A (strain AKU_12601)</name>
    <dbReference type="NCBI Taxonomy" id="554290"/>
    <lineage>
        <taxon>Bacteria</taxon>
        <taxon>Pseudomonadati</taxon>
        <taxon>Pseudomonadota</taxon>
        <taxon>Gammaproteobacteria</taxon>
        <taxon>Enterobacterales</taxon>
        <taxon>Enterobacteriaceae</taxon>
        <taxon>Salmonella</taxon>
    </lineage>
</organism>
<reference key="1">
    <citation type="journal article" date="2009" name="BMC Genomics">
        <title>Pseudogene accumulation in the evolutionary histories of Salmonella enterica serovars Paratyphi A and Typhi.</title>
        <authorList>
            <person name="Holt K.E."/>
            <person name="Thomson N.R."/>
            <person name="Wain J."/>
            <person name="Langridge G.C."/>
            <person name="Hasan R."/>
            <person name="Bhutta Z.A."/>
            <person name="Quail M.A."/>
            <person name="Norbertczak H."/>
            <person name="Walker D."/>
            <person name="Simmonds M."/>
            <person name="White B."/>
            <person name="Bason N."/>
            <person name="Mungall K."/>
            <person name="Dougan G."/>
            <person name="Parkhill J."/>
        </authorList>
    </citation>
    <scope>NUCLEOTIDE SEQUENCE [LARGE SCALE GENOMIC DNA]</scope>
    <source>
        <strain>AKU_12601</strain>
    </source>
</reference>
<keyword id="KW-0238">DNA-binding</keyword>
<keyword id="KW-0255">Endonuclease</keyword>
<keyword id="KW-0378">Hydrolase</keyword>
<keyword id="KW-0460">Magnesium</keyword>
<keyword id="KW-0479">Metal-binding</keyword>
<keyword id="KW-0540">Nuclease</keyword>
<keyword id="KW-0630">Potassium</keyword>
<dbReference type="EC" id="3.1.-.-" evidence="1"/>
<dbReference type="EMBL" id="FM200053">
    <property type="protein sequence ID" value="CAR60884.1"/>
    <property type="molecule type" value="Genomic_DNA"/>
</dbReference>
<dbReference type="SMR" id="B5BF27"/>
<dbReference type="KEGG" id="sek:SSPA2642"/>
<dbReference type="HOGENOM" id="CLU_004675_1_2_6"/>
<dbReference type="Proteomes" id="UP000001869">
    <property type="component" value="Chromosome"/>
</dbReference>
<dbReference type="GO" id="GO:0008409">
    <property type="term" value="F:5'-3' exonuclease activity"/>
    <property type="evidence" value="ECO:0007669"/>
    <property type="project" value="InterPro"/>
</dbReference>
<dbReference type="GO" id="GO:0017108">
    <property type="term" value="F:5'-flap endonuclease activity"/>
    <property type="evidence" value="ECO:0007669"/>
    <property type="project" value="UniProtKB-UniRule"/>
</dbReference>
<dbReference type="GO" id="GO:0003677">
    <property type="term" value="F:DNA binding"/>
    <property type="evidence" value="ECO:0007669"/>
    <property type="project" value="UniProtKB-UniRule"/>
</dbReference>
<dbReference type="GO" id="GO:0000287">
    <property type="term" value="F:magnesium ion binding"/>
    <property type="evidence" value="ECO:0007669"/>
    <property type="project" value="UniProtKB-UniRule"/>
</dbReference>
<dbReference type="GO" id="GO:0030955">
    <property type="term" value="F:potassium ion binding"/>
    <property type="evidence" value="ECO:0007669"/>
    <property type="project" value="UniProtKB-UniRule"/>
</dbReference>
<dbReference type="GO" id="GO:0033567">
    <property type="term" value="P:DNA replication, Okazaki fragment processing"/>
    <property type="evidence" value="ECO:0007669"/>
    <property type="project" value="UniProtKB-UniRule"/>
</dbReference>
<dbReference type="CDD" id="cd09898">
    <property type="entry name" value="H3TH_53EXO"/>
    <property type="match status" value="1"/>
</dbReference>
<dbReference type="CDD" id="cd09859">
    <property type="entry name" value="PIN_53EXO"/>
    <property type="match status" value="1"/>
</dbReference>
<dbReference type="FunFam" id="1.10.150.20:FF:000003">
    <property type="entry name" value="DNA polymerase I"/>
    <property type="match status" value="1"/>
</dbReference>
<dbReference type="FunFam" id="3.40.50.1010:FF:000011">
    <property type="entry name" value="Flap endonuclease Xni"/>
    <property type="match status" value="1"/>
</dbReference>
<dbReference type="Gene3D" id="1.10.150.20">
    <property type="entry name" value="5' to 3' exonuclease, C-terminal subdomain"/>
    <property type="match status" value="1"/>
</dbReference>
<dbReference type="Gene3D" id="3.40.50.1010">
    <property type="entry name" value="5'-nuclease"/>
    <property type="match status" value="1"/>
</dbReference>
<dbReference type="HAMAP" id="MF_01192">
    <property type="entry name" value="Xni"/>
    <property type="match status" value="1"/>
</dbReference>
<dbReference type="InterPro" id="IPR020046">
    <property type="entry name" value="5-3_exonucl_a-hlix_arch_N"/>
</dbReference>
<dbReference type="InterPro" id="IPR002421">
    <property type="entry name" value="5-3_exonuclease"/>
</dbReference>
<dbReference type="InterPro" id="IPR036279">
    <property type="entry name" value="5-3_exonuclease_C_sf"/>
</dbReference>
<dbReference type="InterPro" id="IPR020045">
    <property type="entry name" value="DNA_polI_H3TH"/>
</dbReference>
<dbReference type="InterPro" id="IPR038969">
    <property type="entry name" value="FEN"/>
</dbReference>
<dbReference type="InterPro" id="IPR008918">
    <property type="entry name" value="HhH2"/>
</dbReference>
<dbReference type="InterPro" id="IPR029060">
    <property type="entry name" value="PIN-like_dom_sf"/>
</dbReference>
<dbReference type="InterPro" id="IPR022895">
    <property type="entry name" value="Xni"/>
</dbReference>
<dbReference type="NCBIfam" id="NF007017">
    <property type="entry name" value="PRK09482.1"/>
    <property type="match status" value="1"/>
</dbReference>
<dbReference type="PANTHER" id="PTHR42646:SF2">
    <property type="entry name" value="5'-3' EXONUCLEASE FAMILY PROTEIN"/>
    <property type="match status" value="1"/>
</dbReference>
<dbReference type="PANTHER" id="PTHR42646">
    <property type="entry name" value="FLAP ENDONUCLEASE XNI"/>
    <property type="match status" value="1"/>
</dbReference>
<dbReference type="Pfam" id="PF01367">
    <property type="entry name" value="5_3_exonuc"/>
    <property type="match status" value="1"/>
</dbReference>
<dbReference type="Pfam" id="PF02739">
    <property type="entry name" value="5_3_exonuc_N"/>
    <property type="match status" value="1"/>
</dbReference>
<dbReference type="SMART" id="SM00475">
    <property type="entry name" value="53EXOc"/>
    <property type="match status" value="1"/>
</dbReference>
<dbReference type="SMART" id="SM00279">
    <property type="entry name" value="HhH2"/>
    <property type="match status" value="1"/>
</dbReference>
<dbReference type="SUPFAM" id="SSF47807">
    <property type="entry name" value="5' to 3' exonuclease, C-terminal subdomain"/>
    <property type="match status" value="1"/>
</dbReference>
<dbReference type="SUPFAM" id="SSF88723">
    <property type="entry name" value="PIN domain-like"/>
    <property type="match status" value="1"/>
</dbReference>
<comment type="function">
    <text evidence="1">Has flap endonuclease activity. During DNA replication, flap endonucleases cleave the 5'-overhanging flap structure that is generated by displacement synthesis when DNA polymerase encounters the 5'-end of a downstream Okazaki fragment.</text>
</comment>
<comment type="cofactor">
    <cofactor evidence="1">
        <name>Mg(2+)</name>
        <dbReference type="ChEBI" id="CHEBI:18420"/>
    </cofactor>
    <text evidence="1">Binds 2 Mg(2+) per subunit. Only one magnesium ion has a direct interaction with the protein, the other interactions are indirect.</text>
</comment>
<comment type="cofactor">
    <cofactor evidence="1">
        <name>K(+)</name>
        <dbReference type="ChEBI" id="CHEBI:29103"/>
    </cofactor>
    <text evidence="1">Binds 1 K(+) per subunit. The potassium ion strongly increases the affinity for DNA.</text>
</comment>
<comment type="similarity">
    <text evidence="1">Belongs to the Xni family.</text>
</comment>
<proteinExistence type="inferred from homology"/>
<protein>
    <recommendedName>
        <fullName evidence="1">Flap endonuclease Xni</fullName>
        <shortName evidence="1">FEN</shortName>
        <ecNumber evidence="1">3.1.-.-</ecNumber>
    </recommendedName>
</protein>
<accession>B5BF27</accession>